<name>DEOC_STRGC</name>
<organism>
    <name type="scientific">Streptococcus gordonii (strain Challis / ATCC 35105 / BCRC 15272 / CH1 / DL1 / V288)</name>
    <dbReference type="NCBI Taxonomy" id="467705"/>
    <lineage>
        <taxon>Bacteria</taxon>
        <taxon>Bacillati</taxon>
        <taxon>Bacillota</taxon>
        <taxon>Bacilli</taxon>
        <taxon>Lactobacillales</taxon>
        <taxon>Streptococcaceae</taxon>
        <taxon>Streptococcus</taxon>
    </lineage>
</organism>
<keyword id="KW-0963">Cytoplasm</keyword>
<keyword id="KW-0456">Lyase</keyword>
<keyword id="KW-1185">Reference proteome</keyword>
<keyword id="KW-0704">Schiff base</keyword>
<reference key="1">
    <citation type="journal article" date="2007" name="J. Bacteriol.">
        <title>Genome-wide transcriptional changes in Streptococcus gordonii in response to competence signaling peptide.</title>
        <authorList>
            <person name="Vickerman M.M."/>
            <person name="Iobst S."/>
            <person name="Jesionowski A.M."/>
            <person name="Gill S.R."/>
        </authorList>
    </citation>
    <scope>NUCLEOTIDE SEQUENCE [LARGE SCALE GENOMIC DNA]</scope>
    <source>
        <strain>Challis / ATCC 35105 / BCRC 15272 / CH1 / DL1 / V288</strain>
    </source>
</reference>
<comment type="function">
    <text evidence="1">Catalyzes a reversible aldol reaction between acetaldehyde and D-glyceraldehyde 3-phosphate to generate 2-deoxy-D-ribose 5-phosphate.</text>
</comment>
<comment type="catalytic activity">
    <reaction evidence="1">
        <text>2-deoxy-D-ribose 5-phosphate = D-glyceraldehyde 3-phosphate + acetaldehyde</text>
        <dbReference type="Rhea" id="RHEA:12821"/>
        <dbReference type="ChEBI" id="CHEBI:15343"/>
        <dbReference type="ChEBI" id="CHEBI:59776"/>
        <dbReference type="ChEBI" id="CHEBI:62877"/>
        <dbReference type="EC" id="4.1.2.4"/>
    </reaction>
</comment>
<comment type="pathway">
    <text evidence="1">Carbohydrate degradation; 2-deoxy-D-ribose 1-phosphate degradation; D-glyceraldehyde 3-phosphate and acetaldehyde from 2-deoxy-alpha-D-ribose 1-phosphate: step 2/2.</text>
</comment>
<comment type="subcellular location">
    <subcellularLocation>
        <location evidence="1">Cytoplasm</location>
    </subcellularLocation>
</comment>
<comment type="similarity">
    <text evidence="1">Belongs to the DeoC/FbaB aldolase family. DeoC type 1 subfamily.</text>
</comment>
<sequence>MKLNKYIDHTLLKPEATKEQIEKVIEEAKEYDFASVCVNPTWVKLAAEGLSGSDVKVCTVIGFPLGATTPEVKAFETKNAIENGADEIDMVINIGALKSGNLDLLERDIQAVVEASGEKLVKVIIETCLLTDQEKVLACQVSQKAGADFVKTSTGFSTGGATVEDVALMRQTVGPDMGVKASGGARSYDDAQAFIKAGATRIGASSGVAIMKGETASGNY</sequence>
<feature type="chain" id="PRO_1000076030" description="Deoxyribose-phosphate aldolase">
    <location>
        <begin position="1"/>
        <end position="220"/>
    </location>
</feature>
<feature type="active site" description="Proton donor/acceptor" evidence="1">
    <location>
        <position position="89"/>
    </location>
</feature>
<feature type="active site" description="Schiff-base intermediate with acetaldehyde" evidence="1">
    <location>
        <position position="151"/>
    </location>
</feature>
<feature type="active site" description="Proton donor/acceptor" evidence="1">
    <location>
        <position position="180"/>
    </location>
</feature>
<proteinExistence type="inferred from homology"/>
<gene>
    <name evidence="1" type="primary">deoC</name>
    <name type="ordered locus">SGO_1080</name>
</gene>
<dbReference type="EC" id="4.1.2.4" evidence="1"/>
<dbReference type="EMBL" id="CP000725">
    <property type="protein sequence ID" value="ABV10520.1"/>
    <property type="molecule type" value="Genomic_DNA"/>
</dbReference>
<dbReference type="RefSeq" id="WP_012000492.1">
    <property type="nucleotide sequence ID" value="NC_009785.1"/>
</dbReference>
<dbReference type="SMR" id="A8AX59"/>
<dbReference type="STRING" id="467705.SGO_1080"/>
<dbReference type="KEGG" id="sgo:SGO_1080"/>
<dbReference type="eggNOG" id="COG0274">
    <property type="taxonomic scope" value="Bacteria"/>
</dbReference>
<dbReference type="HOGENOM" id="CLU_053595_0_1_9"/>
<dbReference type="UniPathway" id="UPA00002">
    <property type="reaction ID" value="UER00468"/>
</dbReference>
<dbReference type="Proteomes" id="UP000001131">
    <property type="component" value="Chromosome"/>
</dbReference>
<dbReference type="GO" id="GO:0005737">
    <property type="term" value="C:cytoplasm"/>
    <property type="evidence" value="ECO:0007669"/>
    <property type="project" value="UniProtKB-SubCell"/>
</dbReference>
<dbReference type="GO" id="GO:0004139">
    <property type="term" value="F:deoxyribose-phosphate aldolase activity"/>
    <property type="evidence" value="ECO:0007669"/>
    <property type="project" value="UniProtKB-UniRule"/>
</dbReference>
<dbReference type="GO" id="GO:0006018">
    <property type="term" value="P:2-deoxyribose 1-phosphate catabolic process"/>
    <property type="evidence" value="ECO:0007669"/>
    <property type="project" value="UniProtKB-UniRule"/>
</dbReference>
<dbReference type="GO" id="GO:0016052">
    <property type="term" value="P:carbohydrate catabolic process"/>
    <property type="evidence" value="ECO:0007669"/>
    <property type="project" value="TreeGrafter"/>
</dbReference>
<dbReference type="GO" id="GO:0009264">
    <property type="term" value="P:deoxyribonucleotide catabolic process"/>
    <property type="evidence" value="ECO:0007669"/>
    <property type="project" value="InterPro"/>
</dbReference>
<dbReference type="CDD" id="cd00959">
    <property type="entry name" value="DeoC"/>
    <property type="match status" value="1"/>
</dbReference>
<dbReference type="FunFam" id="3.20.20.70:FF:000044">
    <property type="entry name" value="Deoxyribose-phosphate aldolase"/>
    <property type="match status" value="1"/>
</dbReference>
<dbReference type="Gene3D" id="3.20.20.70">
    <property type="entry name" value="Aldolase class I"/>
    <property type="match status" value="1"/>
</dbReference>
<dbReference type="HAMAP" id="MF_00114">
    <property type="entry name" value="DeoC_type1"/>
    <property type="match status" value="1"/>
</dbReference>
<dbReference type="InterPro" id="IPR013785">
    <property type="entry name" value="Aldolase_TIM"/>
</dbReference>
<dbReference type="InterPro" id="IPR011343">
    <property type="entry name" value="DeoC"/>
</dbReference>
<dbReference type="InterPro" id="IPR002915">
    <property type="entry name" value="DeoC/FbaB/LacD_aldolase"/>
</dbReference>
<dbReference type="InterPro" id="IPR028581">
    <property type="entry name" value="DeoC_typeI"/>
</dbReference>
<dbReference type="NCBIfam" id="TIGR00126">
    <property type="entry name" value="deoC"/>
    <property type="match status" value="1"/>
</dbReference>
<dbReference type="PANTHER" id="PTHR10889">
    <property type="entry name" value="DEOXYRIBOSE-PHOSPHATE ALDOLASE"/>
    <property type="match status" value="1"/>
</dbReference>
<dbReference type="PANTHER" id="PTHR10889:SF1">
    <property type="entry name" value="DEOXYRIBOSE-PHOSPHATE ALDOLASE"/>
    <property type="match status" value="1"/>
</dbReference>
<dbReference type="Pfam" id="PF01791">
    <property type="entry name" value="DeoC"/>
    <property type="match status" value="1"/>
</dbReference>
<dbReference type="PIRSF" id="PIRSF001357">
    <property type="entry name" value="DeoC"/>
    <property type="match status" value="1"/>
</dbReference>
<dbReference type="SMART" id="SM01133">
    <property type="entry name" value="DeoC"/>
    <property type="match status" value="1"/>
</dbReference>
<dbReference type="SUPFAM" id="SSF51569">
    <property type="entry name" value="Aldolase"/>
    <property type="match status" value="1"/>
</dbReference>
<accession>A8AX59</accession>
<evidence type="ECO:0000255" key="1">
    <source>
        <dbReference type="HAMAP-Rule" id="MF_00114"/>
    </source>
</evidence>
<protein>
    <recommendedName>
        <fullName evidence="1">Deoxyribose-phosphate aldolase</fullName>
        <shortName evidence="1">DERA</shortName>
        <ecNumber evidence="1">4.1.2.4</ecNumber>
    </recommendedName>
    <alternativeName>
        <fullName evidence="1">2-deoxy-D-ribose 5-phosphate aldolase</fullName>
    </alternativeName>
    <alternativeName>
        <fullName evidence="1">Phosphodeoxyriboaldolase</fullName>
        <shortName evidence="1">Deoxyriboaldolase</shortName>
    </alternativeName>
</protein>